<comment type="function">
    <text evidence="1">Catalyzes the initial step of the lipid cycle reactions in the biosynthesis of the cell wall peptidoglycan: transfers peptidoglycan precursor phospho-MurNAc-pentapeptide from UDP-MurNAc-pentapeptide onto the lipid carrier undecaprenyl phosphate, yielding undecaprenyl-pyrophosphoryl-MurNAc-pentapeptide, known as lipid I.</text>
</comment>
<comment type="catalytic activity">
    <reaction evidence="1">
        <text>UDP-N-acetyl-alpha-D-muramoyl-L-alanyl-gamma-D-glutamyl-meso-2,6-diaminopimeloyl-D-alanyl-D-alanine + di-trans,octa-cis-undecaprenyl phosphate = di-trans,octa-cis-undecaprenyl diphospho-N-acetyl-alpha-D-muramoyl-L-alanyl-D-glutamyl-meso-2,6-diaminopimeloyl-D-alanyl-D-alanine + UMP</text>
        <dbReference type="Rhea" id="RHEA:28386"/>
        <dbReference type="ChEBI" id="CHEBI:57865"/>
        <dbReference type="ChEBI" id="CHEBI:60392"/>
        <dbReference type="ChEBI" id="CHEBI:61386"/>
        <dbReference type="ChEBI" id="CHEBI:61387"/>
        <dbReference type="EC" id="2.7.8.13"/>
    </reaction>
</comment>
<comment type="cofactor">
    <cofactor evidence="1">
        <name>Mg(2+)</name>
        <dbReference type="ChEBI" id="CHEBI:18420"/>
    </cofactor>
</comment>
<comment type="pathway">
    <text evidence="1">Cell wall biogenesis; peptidoglycan biosynthesis.</text>
</comment>
<comment type="subcellular location">
    <subcellularLocation>
        <location evidence="1">Cell inner membrane</location>
        <topology evidence="1">Multi-pass membrane protein</topology>
    </subcellularLocation>
</comment>
<comment type="similarity">
    <text evidence="1">Belongs to the glycosyltransferase 4 family. MraY subfamily.</text>
</comment>
<organism>
    <name type="scientific">Mycobacterium marinum (strain ATCC BAA-535 / M)</name>
    <dbReference type="NCBI Taxonomy" id="216594"/>
    <lineage>
        <taxon>Bacteria</taxon>
        <taxon>Bacillati</taxon>
        <taxon>Actinomycetota</taxon>
        <taxon>Actinomycetes</taxon>
        <taxon>Mycobacteriales</taxon>
        <taxon>Mycobacteriaceae</taxon>
        <taxon>Mycobacterium</taxon>
        <taxon>Mycobacterium ulcerans group</taxon>
    </lineage>
</organism>
<protein>
    <recommendedName>
        <fullName evidence="1">Phospho-N-acetylmuramoyl-pentapeptide-transferase</fullName>
        <ecNumber evidence="1">2.7.8.13</ecNumber>
    </recommendedName>
    <alternativeName>
        <fullName evidence="1">UDP-MurNAc-pentapeptide phosphotransferase</fullName>
    </alternativeName>
</protein>
<name>MRAY_MYCMM</name>
<reference key="1">
    <citation type="journal article" date="2008" name="Genome Res.">
        <title>Insights from the complete genome sequence of Mycobacterium marinum on the evolution of Mycobacterium tuberculosis.</title>
        <authorList>
            <person name="Stinear T.P."/>
            <person name="Seemann T."/>
            <person name="Harrison P.F."/>
            <person name="Jenkin G.A."/>
            <person name="Davies J.K."/>
            <person name="Johnson P.D."/>
            <person name="Abdellah Z."/>
            <person name="Arrowsmith C."/>
            <person name="Chillingworth T."/>
            <person name="Churcher C."/>
            <person name="Clarke K."/>
            <person name="Cronin A."/>
            <person name="Davis P."/>
            <person name="Goodhead I."/>
            <person name="Holroyd N."/>
            <person name="Jagels K."/>
            <person name="Lord A."/>
            <person name="Moule S."/>
            <person name="Mungall K."/>
            <person name="Norbertczak H."/>
            <person name="Quail M.A."/>
            <person name="Rabbinowitsch E."/>
            <person name="Walker D."/>
            <person name="White B."/>
            <person name="Whitehead S."/>
            <person name="Small P.L."/>
            <person name="Brosch R."/>
            <person name="Ramakrishnan L."/>
            <person name="Fischbach M.A."/>
            <person name="Parkhill J."/>
            <person name="Cole S.T."/>
        </authorList>
    </citation>
    <scope>NUCLEOTIDE SEQUENCE [LARGE SCALE GENOMIC DNA]</scope>
    <source>
        <strain>ATCC BAA-535 / M</strain>
    </source>
</reference>
<feature type="chain" id="PRO_1000090647" description="Phospho-N-acetylmuramoyl-pentapeptide-transferase">
    <location>
        <begin position="1"/>
        <end position="359"/>
    </location>
</feature>
<feature type="transmembrane region" description="Helical" evidence="1">
    <location>
        <begin position="3"/>
        <end position="23"/>
    </location>
</feature>
<feature type="transmembrane region" description="Helical" evidence="1">
    <location>
        <begin position="55"/>
        <end position="75"/>
    </location>
</feature>
<feature type="transmembrane region" description="Helical" evidence="1">
    <location>
        <begin position="80"/>
        <end position="100"/>
    </location>
</feature>
<feature type="transmembrane region" description="Helical" evidence="1">
    <location>
        <begin position="117"/>
        <end position="137"/>
    </location>
</feature>
<feature type="transmembrane region" description="Helical" evidence="1">
    <location>
        <begin position="156"/>
        <end position="176"/>
    </location>
</feature>
<feature type="transmembrane region" description="Helical" evidence="1">
    <location>
        <begin position="187"/>
        <end position="207"/>
    </location>
</feature>
<feature type="transmembrane region" description="Helical" evidence="1">
    <location>
        <begin position="231"/>
        <end position="251"/>
    </location>
</feature>
<feature type="transmembrane region" description="Helical" evidence="1">
    <location>
        <begin position="255"/>
        <end position="275"/>
    </location>
</feature>
<feature type="transmembrane region" description="Helical" evidence="1">
    <location>
        <begin position="280"/>
        <end position="300"/>
    </location>
</feature>
<feature type="transmembrane region" description="Helical" evidence="1">
    <location>
        <begin position="334"/>
        <end position="354"/>
    </location>
</feature>
<evidence type="ECO:0000255" key="1">
    <source>
        <dbReference type="HAMAP-Rule" id="MF_00038"/>
    </source>
</evidence>
<keyword id="KW-0131">Cell cycle</keyword>
<keyword id="KW-0132">Cell division</keyword>
<keyword id="KW-0997">Cell inner membrane</keyword>
<keyword id="KW-1003">Cell membrane</keyword>
<keyword id="KW-0133">Cell shape</keyword>
<keyword id="KW-0961">Cell wall biogenesis/degradation</keyword>
<keyword id="KW-0460">Magnesium</keyword>
<keyword id="KW-0472">Membrane</keyword>
<keyword id="KW-0479">Metal-binding</keyword>
<keyword id="KW-0573">Peptidoglycan synthesis</keyword>
<keyword id="KW-1185">Reference proteome</keyword>
<keyword id="KW-0808">Transferase</keyword>
<keyword id="KW-0812">Transmembrane</keyword>
<keyword id="KW-1133">Transmembrane helix</keyword>
<dbReference type="EC" id="2.7.8.13" evidence="1"/>
<dbReference type="EMBL" id="CP000854">
    <property type="protein sequence ID" value="ACC41622.1"/>
    <property type="molecule type" value="Genomic_DNA"/>
</dbReference>
<dbReference type="RefSeq" id="WP_012394862.1">
    <property type="nucleotide sequence ID" value="NC_010612.1"/>
</dbReference>
<dbReference type="SMR" id="B2HGR9"/>
<dbReference type="STRING" id="216594.MMAR_3196"/>
<dbReference type="GeneID" id="34342660"/>
<dbReference type="KEGG" id="mmi:MMAR_3196"/>
<dbReference type="eggNOG" id="COG0472">
    <property type="taxonomic scope" value="Bacteria"/>
</dbReference>
<dbReference type="HOGENOM" id="CLU_023982_0_1_11"/>
<dbReference type="OrthoDB" id="9805475at2"/>
<dbReference type="UniPathway" id="UPA00219"/>
<dbReference type="Proteomes" id="UP000001190">
    <property type="component" value="Chromosome"/>
</dbReference>
<dbReference type="GO" id="GO:0005886">
    <property type="term" value="C:plasma membrane"/>
    <property type="evidence" value="ECO:0007669"/>
    <property type="project" value="UniProtKB-SubCell"/>
</dbReference>
<dbReference type="GO" id="GO:0046872">
    <property type="term" value="F:metal ion binding"/>
    <property type="evidence" value="ECO:0007669"/>
    <property type="project" value="UniProtKB-KW"/>
</dbReference>
<dbReference type="GO" id="GO:0008963">
    <property type="term" value="F:phospho-N-acetylmuramoyl-pentapeptide-transferase activity"/>
    <property type="evidence" value="ECO:0007669"/>
    <property type="project" value="UniProtKB-UniRule"/>
</dbReference>
<dbReference type="GO" id="GO:0051992">
    <property type="term" value="F:UDP-N-acetylmuramoyl-L-alanyl-D-glutamyl-meso-2,6-diaminopimelyl-D-alanyl-D-alanine:undecaprenyl-phosphate transferase activity"/>
    <property type="evidence" value="ECO:0007669"/>
    <property type="project" value="RHEA"/>
</dbReference>
<dbReference type="GO" id="GO:0051301">
    <property type="term" value="P:cell division"/>
    <property type="evidence" value="ECO:0007669"/>
    <property type="project" value="UniProtKB-KW"/>
</dbReference>
<dbReference type="GO" id="GO:0071555">
    <property type="term" value="P:cell wall organization"/>
    <property type="evidence" value="ECO:0007669"/>
    <property type="project" value="UniProtKB-KW"/>
</dbReference>
<dbReference type="GO" id="GO:0009252">
    <property type="term" value="P:peptidoglycan biosynthetic process"/>
    <property type="evidence" value="ECO:0007669"/>
    <property type="project" value="UniProtKB-UniRule"/>
</dbReference>
<dbReference type="GO" id="GO:0008360">
    <property type="term" value="P:regulation of cell shape"/>
    <property type="evidence" value="ECO:0007669"/>
    <property type="project" value="UniProtKB-KW"/>
</dbReference>
<dbReference type="CDD" id="cd06852">
    <property type="entry name" value="GT_MraY"/>
    <property type="match status" value="1"/>
</dbReference>
<dbReference type="HAMAP" id="MF_00038">
    <property type="entry name" value="MraY"/>
    <property type="match status" value="1"/>
</dbReference>
<dbReference type="InterPro" id="IPR000715">
    <property type="entry name" value="Glycosyl_transferase_4"/>
</dbReference>
<dbReference type="InterPro" id="IPR003524">
    <property type="entry name" value="PNAcMuramoyl-5peptid_Trfase"/>
</dbReference>
<dbReference type="InterPro" id="IPR018480">
    <property type="entry name" value="PNAcMuramoyl-5peptid_Trfase_CS"/>
</dbReference>
<dbReference type="NCBIfam" id="TIGR00445">
    <property type="entry name" value="mraY"/>
    <property type="match status" value="1"/>
</dbReference>
<dbReference type="PANTHER" id="PTHR22926">
    <property type="entry name" value="PHOSPHO-N-ACETYLMURAMOYL-PENTAPEPTIDE-TRANSFERASE"/>
    <property type="match status" value="1"/>
</dbReference>
<dbReference type="PANTHER" id="PTHR22926:SF5">
    <property type="entry name" value="PHOSPHO-N-ACETYLMURAMOYL-PENTAPEPTIDE-TRANSFERASE HOMOLOG"/>
    <property type="match status" value="1"/>
</dbReference>
<dbReference type="Pfam" id="PF00953">
    <property type="entry name" value="Glycos_transf_4"/>
    <property type="match status" value="1"/>
</dbReference>
<dbReference type="Pfam" id="PF10555">
    <property type="entry name" value="MraY_sig1"/>
    <property type="match status" value="1"/>
</dbReference>
<dbReference type="PROSITE" id="PS01347">
    <property type="entry name" value="MRAY_1"/>
    <property type="match status" value="1"/>
</dbReference>
<dbReference type="PROSITE" id="PS01348">
    <property type="entry name" value="MRAY_2"/>
    <property type="match status" value="1"/>
</dbReference>
<accession>B2HGR9</accession>
<sequence length="359" mass="37754">MRQIMIAVAIAVAVSILLTPALIRLFTKQGFGHQIREDGPPSHHSKRGTPSMGGVAILAGIWAGYFGTHLAGLAFDGEGITASGLLVLGLATSLGGVGFLDDLIKLRRSRNLGLNKTAKTVGQITSAVLFAVLVLQFRNPAGLAPASAELSYVREIATVTLTPALFVLFCVLVVSAWSNAVNFTDGLDGLAAGCMAMVTGAYVLITFWQDHNACVTAPGLGCYNVRDPLDLALIAAATAGACIGFLWWNAAPAKIFMGDTGSLALGGIIAGLSVTSRTEILAVVLGALFVAEITSVVLQILTFRTTGRRVFRMAPFHHHFELVGWAETTVIIRFWLLTAITCGLGVALFYGEWLAAIGA</sequence>
<gene>
    <name evidence="1" type="primary">mraY</name>
    <name type="ordered locus">MMAR_3196</name>
</gene>
<proteinExistence type="inferred from homology"/>